<accession>A1ALL5</accession>
<gene>
    <name evidence="1" type="primary">atpA1</name>
    <name type="ordered locus">Ppro_0604</name>
</gene>
<gene>
    <name evidence="1" type="primary">atpA2</name>
    <name type="ordered locus">Ppro_1505</name>
</gene>
<reference key="1">
    <citation type="submission" date="2006-10" db="EMBL/GenBank/DDBJ databases">
        <title>Complete sequence of chromosome of Pelobacter propionicus DSM 2379.</title>
        <authorList>
            <consortium name="US DOE Joint Genome Institute"/>
            <person name="Copeland A."/>
            <person name="Lucas S."/>
            <person name="Lapidus A."/>
            <person name="Barry K."/>
            <person name="Detter J.C."/>
            <person name="Glavina del Rio T."/>
            <person name="Hammon N."/>
            <person name="Israni S."/>
            <person name="Dalin E."/>
            <person name="Tice H."/>
            <person name="Pitluck S."/>
            <person name="Saunders E."/>
            <person name="Brettin T."/>
            <person name="Bruce D."/>
            <person name="Han C."/>
            <person name="Tapia R."/>
            <person name="Schmutz J."/>
            <person name="Larimer F."/>
            <person name="Land M."/>
            <person name="Hauser L."/>
            <person name="Kyrpides N."/>
            <person name="Kim E."/>
            <person name="Lovley D."/>
            <person name="Richardson P."/>
        </authorList>
    </citation>
    <scope>NUCLEOTIDE SEQUENCE [LARGE SCALE GENOMIC DNA]</scope>
    <source>
        <strain>DSM 2379 / NBRC 103807 / OttBd1</strain>
    </source>
</reference>
<sequence>MKIRAEEISEIIKKQIREYGKEVEVSETGTIISIGDGIARIHGLSGAMAGELLEFPGGVSGMVLNLEEDNVGAAVLGEFTAIKEGHTVKRTGRIAEVPVGEALIGRVVNAIGEPIDGKGPIKTDTFSKVEIKAPGIVARKSVDQPMASGLKAVDAMVPIGRGQRELIIGDRQTGKTAVAVDTIINQKGGDVICIYVAIGQKRSTVAQVVAKLSDHGAMDYTIVVAASASESAPLQFIAPYSGVTMGEYFRDKGQHALIIYDDLSKQAVAYRQLSLLLRRPPGREAYPGDVFYLHSRLLERACKLSDECGGGSLTALPIIETQAGDVSAYIPTNVISITDGQIYLESDLFFSGVRPAINVGLSVSRVGGKAQTKSMKQVAGTLRLNLAQYREMAAFAQFGSDLDKATQMQLARGERLVEILKQPQYRPLSNEKQVLIIFAANNGFLDELPVSTLRRYEDEMYAFFDNRQADLLSELRDKKAIDDELKKRIVAALEQFKKEFSA</sequence>
<feature type="chain" id="PRO_0000339043" description="ATP synthase subunit alpha">
    <location>
        <begin position="1"/>
        <end position="502"/>
    </location>
</feature>
<feature type="binding site" evidence="1">
    <location>
        <begin position="169"/>
        <end position="176"/>
    </location>
    <ligand>
        <name>ATP</name>
        <dbReference type="ChEBI" id="CHEBI:30616"/>
    </ligand>
</feature>
<feature type="site" description="Required for activity" evidence="1">
    <location>
        <position position="362"/>
    </location>
</feature>
<protein>
    <recommendedName>
        <fullName evidence="1">ATP synthase subunit alpha</fullName>
        <ecNumber evidence="1">7.1.2.2</ecNumber>
    </recommendedName>
    <alternativeName>
        <fullName evidence="1">ATP synthase F1 sector subunit alpha</fullName>
    </alternativeName>
    <alternativeName>
        <fullName evidence="1">F-ATPase subunit alpha</fullName>
    </alternativeName>
</protein>
<organism>
    <name type="scientific">Pelobacter propionicus (strain DSM 2379 / NBRC 103807 / OttBd1)</name>
    <dbReference type="NCBI Taxonomy" id="338966"/>
    <lineage>
        <taxon>Bacteria</taxon>
        <taxon>Pseudomonadati</taxon>
        <taxon>Thermodesulfobacteriota</taxon>
        <taxon>Desulfuromonadia</taxon>
        <taxon>Desulfuromonadales</taxon>
        <taxon>Desulfuromonadaceae</taxon>
        <taxon>Pelobacter</taxon>
    </lineage>
</organism>
<evidence type="ECO:0000255" key="1">
    <source>
        <dbReference type="HAMAP-Rule" id="MF_01346"/>
    </source>
</evidence>
<proteinExistence type="inferred from homology"/>
<name>ATPA_PELPD</name>
<dbReference type="EC" id="7.1.2.2" evidence="1"/>
<dbReference type="EMBL" id="CP000482">
    <property type="protein sequence ID" value="ABK98235.1"/>
    <property type="molecule type" value="Genomic_DNA"/>
</dbReference>
<dbReference type="EMBL" id="CP000482">
    <property type="protein sequence ID" value="ABK99120.1"/>
    <property type="molecule type" value="Genomic_DNA"/>
</dbReference>
<dbReference type="RefSeq" id="WP_011734548.1">
    <property type="nucleotide sequence ID" value="NC_008609.1"/>
</dbReference>
<dbReference type="SMR" id="A1ALL5"/>
<dbReference type="STRING" id="338966.Ppro_0604"/>
<dbReference type="KEGG" id="ppd:Ppro_0604"/>
<dbReference type="KEGG" id="ppd:Ppro_1505"/>
<dbReference type="eggNOG" id="COG0056">
    <property type="taxonomic scope" value="Bacteria"/>
</dbReference>
<dbReference type="HOGENOM" id="CLU_010091_2_1_7"/>
<dbReference type="OrthoDB" id="9803053at2"/>
<dbReference type="Proteomes" id="UP000006732">
    <property type="component" value="Chromosome"/>
</dbReference>
<dbReference type="GO" id="GO:0005886">
    <property type="term" value="C:plasma membrane"/>
    <property type="evidence" value="ECO:0007669"/>
    <property type="project" value="UniProtKB-SubCell"/>
</dbReference>
<dbReference type="GO" id="GO:0045259">
    <property type="term" value="C:proton-transporting ATP synthase complex"/>
    <property type="evidence" value="ECO:0007669"/>
    <property type="project" value="UniProtKB-KW"/>
</dbReference>
<dbReference type="GO" id="GO:0043531">
    <property type="term" value="F:ADP binding"/>
    <property type="evidence" value="ECO:0007669"/>
    <property type="project" value="TreeGrafter"/>
</dbReference>
<dbReference type="GO" id="GO:0005524">
    <property type="term" value="F:ATP binding"/>
    <property type="evidence" value="ECO:0007669"/>
    <property type="project" value="UniProtKB-UniRule"/>
</dbReference>
<dbReference type="GO" id="GO:0046933">
    <property type="term" value="F:proton-transporting ATP synthase activity, rotational mechanism"/>
    <property type="evidence" value="ECO:0007669"/>
    <property type="project" value="UniProtKB-UniRule"/>
</dbReference>
<dbReference type="CDD" id="cd18113">
    <property type="entry name" value="ATP-synt_F1_alpha_C"/>
    <property type="match status" value="1"/>
</dbReference>
<dbReference type="CDD" id="cd18116">
    <property type="entry name" value="ATP-synt_F1_alpha_N"/>
    <property type="match status" value="1"/>
</dbReference>
<dbReference type="CDD" id="cd01132">
    <property type="entry name" value="F1-ATPase_alpha_CD"/>
    <property type="match status" value="1"/>
</dbReference>
<dbReference type="FunFam" id="1.20.150.20:FF:000001">
    <property type="entry name" value="ATP synthase subunit alpha"/>
    <property type="match status" value="1"/>
</dbReference>
<dbReference type="FunFam" id="2.40.30.20:FF:000001">
    <property type="entry name" value="ATP synthase subunit alpha"/>
    <property type="match status" value="1"/>
</dbReference>
<dbReference type="FunFam" id="3.40.50.300:FF:000002">
    <property type="entry name" value="ATP synthase subunit alpha"/>
    <property type="match status" value="1"/>
</dbReference>
<dbReference type="Gene3D" id="2.40.30.20">
    <property type="match status" value="1"/>
</dbReference>
<dbReference type="Gene3D" id="1.20.150.20">
    <property type="entry name" value="ATP synthase alpha/beta chain, C-terminal domain"/>
    <property type="match status" value="1"/>
</dbReference>
<dbReference type="Gene3D" id="3.40.50.300">
    <property type="entry name" value="P-loop containing nucleotide triphosphate hydrolases"/>
    <property type="match status" value="1"/>
</dbReference>
<dbReference type="HAMAP" id="MF_01346">
    <property type="entry name" value="ATP_synth_alpha_bact"/>
    <property type="match status" value="1"/>
</dbReference>
<dbReference type="InterPro" id="IPR023366">
    <property type="entry name" value="ATP_synth_asu-like_sf"/>
</dbReference>
<dbReference type="InterPro" id="IPR000793">
    <property type="entry name" value="ATP_synth_asu_C"/>
</dbReference>
<dbReference type="InterPro" id="IPR038376">
    <property type="entry name" value="ATP_synth_asu_C_sf"/>
</dbReference>
<dbReference type="InterPro" id="IPR033732">
    <property type="entry name" value="ATP_synth_F1_a_nt-bd_dom"/>
</dbReference>
<dbReference type="InterPro" id="IPR005294">
    <property type="entry name" value="ATP_synth_F1_asu"/>
</dbReference>
<dbReference type="InterPro" id="IPR020003">
    <property type="entry name" value="ATPase_a/bsu_AS"/>
</dbReference>
<dbReference type="InterPro" id="IPR004100">
    <property type="entry name" value="ATPase_F1/V1/A1_a/bsu_N"/>
</dbReference>
<dbReference type="InterPro" id="IPR036121">
    <property type="entry name" value="ATPase_F1/V1/A1_a/bsu_N_sf"/>
</dbReference>
<dbReference type="InterPro" id="IPR000194">
    <property type="entry name" value="ATPase_F1/V1/A1_a/bsu_nucl-bd"/>
</dbReference>
<dbReference type="InterPro" id="IPR027417">
    <property type="entry name" value="P-loop_NTPase"/>
</dbReference>
<dbReference type="NCBIfam" id="TIGR00962">
    <property type="entry name" value="atpA"/>
    <property type="match status" value="1"/>
</dbReference>
<dbReference type="NCBIfam" id="NF009884">
    <property type="entry name" value="PRK13343.1"/>
    <property type="match status" value="1"/>
</dbReference>
<dbReference type="PANTHER" id="PTHR48082">
    <property type="entry name" value="ATP SYNTHASE SUBUNIT ALPHA, MITOCHONDRIAL"/>
    <property type="match status" value="1"/>
</dbReference>
<dbReference type="PANTHER" id="PTHR48082:SF2">
    <property type="entry name" value="ATP SYNTHASE SUBUNIT ALPHA, MITOCHONDRIAL"/>
    <property type="match status" value="1"/>
</dbReference>
<dbReference type="Pfam" id="PF00006">
    <property type="entry name" value="ATP-synt_ab"/>
    <property type="match status" value="1"/>
</dbReference>
<dbReference type="Pfam" id="PF00306">
    <property type="entry name" value="ATP-synt_ab_C"/>
    <property type="match status" value="1"/>
</dbReference>
<dbReference type="Pfam" id="PF02874">
    <property type="entry name" value="ATP-synt_ab_N"/>
    <property type="match status" value="1"/>
</dbReference>
<dbReference type="PIRSF" id="PIRSF039088">
    <property type="entry name" value="F_ATPase_subunit_alpha"/>
    <property type="match status" value="1"/>
</dbReference>
<dbReference type="SUPFAM" id="SSF47917">
    <property type="entry name" value="C-terminal domain of alpha and beta subunits of F1 ATP synthase"/>
    <property type="match status" value="1"/>
</dbReference>
<dbReference type="SUPFAM" id="SSF50615">
    <property type="entry name" value="N-terminal domain of alpha and beta subunits of F1 ATP synthase"/>
    <property type="match status" value="1"/>
</dbReference>
<dbReference type="SUPFAM" id="SSF52540">
    <property type="entry name" value="P-loop containing nucleoside triphosphate hydrolases"/>
    <property type="match status" value="1"/>
</dbReference>
<dbReference type="PROSITE" id="PS00152">
    <property type="entry name" value="ATPASE_ALPHA_BETA"/>
    <property type="match status" value="1"/>
</dbReference>
<keyword id="KW-0066">ATP synthesis</keyword>
<keyword id="KW-0067">ATP-binding</keyword>
<keyword id="KW-0997">Cell inner membrane</keyword>
<keyword id="KW-1003">Cell membrane</keyword>
<keyword id="KW-0139">CF(1)</keyword>
<keyword id="KW-0375">Hydrogen ion transport</keyword>
<keyword id="KW-0406">Ion transport</keyword>
<keyword id="KW-0472">Membrane</keyword>
<keyword id="KW-0547">Nucleotide-binding</keyword>
<keyword id="KW-1185">Reference proteome</keyword>
<keyword id="KW-1278">Translocase</keyword>
<keyword id="KW-0813">Transport</keyword>
<comment type="function">
    <text evidence="1">Produces ATP from ADP in the presence of a proton gradient across the membrane. The alpha chain is a regulatory subunit.</text>
</comment>
<comment type="catalytic activity">
    <reaction evidence="1">
        <text>ATP + H2O + 4 H(+)(in) = ADP + phosphate + 5 H(+)(out)</text>
        <dbReference type="Rhea" id="RHEA:57720"/>
        <dbReference type="ChEBI" id="CHEBI:15377"/>
        <dbReference type="ChEBI" id="CHEBI:15378"/>
        <dbReference type="ChEBI" id="CHEBI:30616"/>
        <dbReference type="ChEBI" id="CHEBI:43474"/>
        <dbReference type="ChEBI" id="CHEBI:456216"/>
        <dbReference type="EC" id="7.1.2.2"/>
    </reaction>
</comment>
<comment type="subunit">
    <text evidence="1">F-type ATPases have 2 components, CF(1) - the catalytic core - and CF(0) - the membrane proton channel. CF(1) has five subunits: alpha(3), beta(3), gamma(1), delta(1), epsilon(1). CF(0) has three main subunits: a(1), b(2) and c(9-12). The alpha and beta chains form an alternating ring which encloses part of the gamma chain. CF(1) is attached to CF(0) by a central stalk formed by the gamma and epsilon chains, while a peripheral stalk is formed by the delta and b chains.</text>
</comment>
<comment type="subcellular location">
    <subcellularLocation>
        <location evidence="1">Cell inner membrane</location>
        <topology evidence="1">Peripheral membrane protein</topology>
    </subcellularLocation>
</comment>
<comment type="similarity">
    <text evidence="1">Belongs to the ATPase alpha/beta chains family.</text>
</comment>